<gene>
    <name evidence="6" type="primary">Klc2</name>
</gene>
<organism>
    <name type="scientific">Mus musculus</name>
    <name type="common">Mouse</name>
    <dbReference type="NCBI Taxonomy" id="10090"/>
    <lineage>
        <taxon>Eukaryota</taxon>
        <taxon>Metazoa</taxon>
        <taxon>Chordata</taxon>
        <taxon>Craniata</taxon>
        <taxon>Vertebrata</taxon>
        <taxon>Euteleostomi</taxon>
        <taxon>Mammalia</taxon>
        <taxon>Eutheria</taxon>
        <taxon>Euarchontoglires</taxon>
        <taxon>Glires</taxon>
        <taxon>Rodentia</taxon>
        <taxon>Myomorpha</taxon>
        <taxon>Muroidea</taxon>
        <taxon>Muridae</taxon>
        <taxon>Murinae</taxon>
        <taxon>Mus</taxon>
        <taxon>Mus</taxon>
    </lineage>
</organism>
<proteinExistence type="evidence at protein level"/>
<reference key="1">
    <citation type="journal article" date="1998" name="J. Biol. Chem.">
        <title>Two kinesin light chain genes in mice. Identification and characterization of the encoded proteins.</title>
        <authorList>
            <person name="Rahman A."/>
            <person name="Friedman D.S."/>
            <person name="Goldstein L.S."/>
        </authorList>
    </citation>
    <scope>NUCLEOTIDE SEQUENCE [MRNA]</scope>
    <source>
        <strain>BALB/cJ</strain>
        <tissue>Brain</tissue>
    </source>
</reference>
<reference key="2">
    <citation type="journal article" date="2009" name="Mol. Cell. Proteomics">
        <title>Large scale localization of protein phosphorylation by use of electron capture dissociation mass spectrometry.</title>
        <authorList>
            <person name="Sweet S.M."/>
            <person name="Bailey C.M."/>
            <person name="Cunningham D.L."/>
            <person name="Heath J.K."/>
            <person name="Cooper H.J."/>
        </authorList>
    </citation>
    <scope>PHOSPHORYLATION [LARGE SCALE ANALYSIS] AT SER-575</scope>
    <scope>IDENTIFICATION BY MASS SPECTROMETRY [LARGE SCALE ANALYSIS]</scope>
    <source>
        <tissue>Embryonic fibroblast</tissue>
    </source>
</reference>
<reference key="3">
    <citation type="journal article" date="2010" name="Cell">
        <title>A tissue-specific atlas of mouse protein phosphorylation and expression.</title>
        <authorList>
            <person name="Huttlin E.L."/>
            <person name="Jedrychowski M.P."/>
            <person name="Elias J.E."/>
            <person name="Goswami T."/>
            <person name="Rad R."/>
            <person name="Beausoleil S.A."/>
            <person name="Villen J."/>
            <person name="Haas W."/>
            <person name="Sowa M.E."/>
            <person name="Gygi S.P."/>
        </authorList>
    </citation>
    <scope>PHOSPHORYLATION [LARGE SCALE ANALYSIS] AT SER-174; SER-178; SER-443; SER-505 AND SER-575</scope>
    <scope>IDENTIFICATION BY MASS SPECTROMETRY [LARGE SCALE ANALYSIS]</scope>
    <source>
        <tissue>Brain</tissue>
        <tissue>Brown adipose tissue</tissue>
        <tissue>Heart</tissue>
        <tissue>Kidney</tissue>
        <tissue>Lung</tissue>
        <tissue>Pancreas</tissue>
        <tissue>Spleen</tissue>
        <tissue>Testis</tissue>
    </source>
</reference>
<reference key="4">
    <citation type="journal article" date="2019" name="PLoS Biol.">
        <title>Mouse screen reveals multiple new genes underlying mouse and human hearing loss.</title>
        <authorList>
            <person name="Ingham N.J."/>
            <person name="Pearson S.A."/>
            <person name="Vancollie V.E."/>
            <person name="Rook V."/>
            <person name="Lewis M.A."/>
            <person name="Chen J."/>
            <person name="Buniello A."/>
            <person name="Martelletti E."/>
            <person name="Preite L."/>
            <person name="Lam C.C."/>
            <person name="Weiss F.D."/>
            <person name="Powis Z."/>
            <person name="Suwannarat P."/>
            <person name="Lelliott C.J."/>
            <person name="Dawson S.J."/>
            <person name="White J.K."/>
            <person name="Steel K.P."/>
        </authorList>
    </citation>
    <scope>DISRUPTION PHENOTYPE</scope>
</reference>
<protein>
    <recommendedName>
        <fullName evidence="5">Kinesin light chain 2</fullName>
        <shortName>KLC 2</shortName>
    </recommendedName>
</protein>
<comment type="function">
    <text evidence="1">Kinesin is a microtubule-associated force-producing protein that plays a role in organelle transport. The light chain functions in coupling of cargo to the heavy chain or in the modulation of its ATPase activity. Through binding with PLEKHM2 and ARL8B, recruits kinesin-1 to lysosomes and hence direct lysosomes movement toward microtubule plus ends.</text>
</comment>
<comment type="subunit">
    <text evidence="1">Oligomeric complex composed of two heavy chains and two light chains. Interacts (via TPR repeats) with PLEKHM2.</text>
</comment>
<comment type="interaction">
    <interactant intactId="EBI-301558">
        <id>O88448</id>
    </interactant>
    <interactant intactId="EBI-301496">
        <id>Q9ESN9</id>
        <label>Mapk8ip3</label>
    </interactant>
    <organismsDiffer>false</organismsDiffer>
    <experiments>5</experiments>
</comment>
<comment type="interaction">
    <interactant intactId="EBI-301558">
        <id>O88448</id>
    </interactant>
    <interactant intactId="EBI-7133540">
        <id>P68619</id>
        <label>OPG164</label>
    </interactant>
    <organismsDiffer>true</organismsDiffer>
    <experiments>3</experiments>
</comment>
<comment type="subcellular location">
    <subcellularLocation>
        <location evidence="1">Cytoplasm</location>
        <location evidence="1">Cytoskeleton</location>
    </subcellularLocation>
    <subcellularLocation>
        <location evidence="1">Lysosome membrane</location>
        <topology evidence="1">Peripheral membrane protein</topology>
        <orientation evidence="1">Cytoplasmic side</orientation>
    </subcellularLocation>
</comment>
<comment type="disruption phenotype">
    <text evidence="4">Mutants show a progressive hearing loss with an increase in auditory brainstem response (ABR) thresholds with age, mostly affecting low frequencies, with a sensorineural (not conductive) pathology. At one month old, there is extensive loss of outer hair cell (OHC) hair bundles.</text>
</comment>
<comment type="similarity">
    <text evidence="5">Belongs to the kinesin light chain family.</text>
</comment>
<keyword id="KW-0002">3D-structure</keyword>
<keyword id="KW-0175">Coiled coil</keyword>
<keyword id="KW-0963">Cytoplasm</keyword>
<keyword id="KW-0206">Cytoskeleton</keyword>
<keyword id="KW-0458">Lysosome</keyword>
<keyword id="KW-0472">Membrane</keyword>
<keyword id="KW-0493">Microtubule</keyword>
<keyword id="KW-0505">Motor protein</keyword>
<keyword id="KW-0597">Phosphoprotein</keyword>
<keyword id="KW-1185">Reference proteome</keyword>
<keyword id="KW-0677">Repeat</keyword>
<keyword id="KW-0802">TPR repeat</keyword>
<dbReference type="EMBL" id="AF055666">
    <property type="protein sequence ID" value="AAC27741.1"/>
    <property type="molecule type" value="mRNA"/>
</dbReference>
<dbReference type="PDB" id="3ZFW">
    <property type="method" value="X-ray"/>
    <property type="resolution" value="2.90 A"/>
    <property type="chains" value="A/B=217-478"/>
</dbReference>
<dbReference type="PDB" id="5FJY">
    <property type="method" value="X-ray"/>
    <property type="resolution" value="4.00 A"/>
    <property type="chains" value="A/B/C=160-478"/>
</dbReference>
<dbReference type="PDB" id="6EJN">
    <property type="method" value="X-ray"/>
    <property type="resolution" value="3.20 A"/>
    <property type="chains" value="A/B=190-477"/>
</dbReference>
<dbReference type="PDBsum" id="3ZFW"/>
<dbReference type="PDBsum" id="5FJY"/>
<dbReference type="PDBsum" id="6EJN"/>
<dbReference type="SMR" id="O88448"/>
<dbReference type="CORUM" id="O88448"/>
<dbReference type="DIP" id="DIP-31518N"/>
<dbReference type="ELM" id="O88448"/>
<dbReference type="FunCoup" id="O88448">
    <property type="interactions" value="862"/>
</dbReference>
<dbReference type="IntAct" id="O88448">
    <property type="interactions" value="14"/>
</dbReference>
<dbReference type="MINT" id="O88448"/>
<dbReference type="STRING" id="10090.ENSMUSP00000112262"/>
<dbReference type="iPTMnet" id="O88448"/>
<dbReference type="PhosphoSitePlus" id="O88448"/>
<dbReference type="SwissPalm" id="O88448"/>
<dbReference type="jPOST" id="O88448"/>
<dbReference type="PaxDb" id="10090-ENSMUSP00000112262"/>
<dbReference type="PeptideAtlas" id="O88448"/>
<dbReference type="ProteomicsDB" id="263614"/>
<dbReference type="Pumba" id="O88448"/>
<dbReference type="AGR" id="MGI:107953"/>
<dbReference type="MGI" id="MGI:107953">
    <property type="gene designation" value="Klc2"/>
</dbReference>
<dbReference type="eggNOG" id="KOG1840">
    <property type="taxonomic scope" value="Eukaryota"/>
</dbReference>
<dbReference type="InParanoid" id="O88448"/>
<dbReference type="Reactome" id="R-MMU-2132295">
    <property type="pathway name" value="MHC class II antigen presentation"/>
</dbReference>
<dbReference type="Reactome" id="R-MMU-5625970">
    <property type="pathway name" value="RHO GTPases activate KTN1"/>
</dbReference>
<dbReference type="Reactome" id="R-MMU-6811434">
    <property type="pathway name" value="COPI-dependent Golgi-to-ER retrograde traffic"/>
</dbReference>
<dbReference type="Reactome" id="R-MMU-983189">
    <property type="pathway name" value="Kinesins"/>
</dbReference>
<dbReference type="CD-CODE" id="CE726F99">
    <property type="entry name" value="Postsynaptic density"/>
</dbReference>
<dbReference type="ChiTaRS" id="Klc2">
    <property type="organism name" value="mouse"/>
</dbReference>
<dbReference type="EvolutionaryTrace" id="O88448"/>
<dbReference type="PRO" id="PR:O88448"/>
<dbReference type="Proteomes" id="UP000000589">
    <property type="component" value="Unplaced"/>
</dbReference>
<dbReference type="RNAct" id="O88448">
    <property type="molecule type" value="protein"/>
</dbReference>
<dbReference type="GO" id="GO:0035253">
    <property type="term" value="C:ciliary rootlet"/>
    <property type="evidence" value="ECO:0000314"/>
    <property type="project" value="MGI"/>
</dbReference>
<dbReference type="GO" id="GO:0005737">
    <property type="term" value="C:cytoplasm"/>
    <property type="evidence" value="ECO:0000314"/>
    <property type="project" value="MGI"/>
</dbReference>
<dbReference type="GO" id="GO:0005829">
    <property type="term" value="C:cytosol"/>
    <property type="evidence" value="ECO:0000314"/>
    <property type="project" value="HGNC-UCL"/>
</dbReference>
<dbReference type="GO" id="GO:0005871">
    <property type="term" value="C:kinesin complex"/>
    <property type="evidence" value="ECO:0000314"/>
    <property type="project" value="HGNC-UCL"/>
</dbReference>
<dbReference type="GO" id="GO:0005765">
    <property type="term" value="C:lysosomal membrane"/>
    <property type="evidence" value="ECO:0007669"/>
    <property type="project" value="UniProtKB-SubCell"/>
</dbReference>
<dbReference type="GO" id="GO:0005874">
    <property type="term" value="C:microtubule"/>
    <property type="evidence" value="ECO:0007669"/>
    <property type="project" value="UniProtKB-KW"/>
</dbReference>
<dbReference type="GO" id="GO:0043005">
    <property type="term" value="C:neuron projection"/>
    <property type="evidence" value="ECO:0000314"/>
    <property type="project" value="MGI"/>
</dbReference>
<dbReference type="GO" id="GO:0019894">
    <property type="term" value="F:kinesin binding"/>
    <property type="evidence" value="ECO:0000353"/>
    <property type="project" value="BHF-UCL"/>
</dbReference>
<dbReference type="GO" id="GO:0008088">
    <property type="term" value="P:axo-dendritic transport"/>
    <property type="evidence" value="ECO:0000315"/>
    <property type="project" value="MGI"/>
</dbReference>
<dbReference type="GO" id="GO:0032418">
    <property type="term" value="P:lysosome localization"/>
    <property type="evidence" value="ECO:0000250"/>
    <property type="project" value="UniProtKB"/>
</dbReference>
<dbReference type="GO" id="GO:0007018">
    <property type="term" value="P:microtubule-based movement"/>
    <property type="evidence" value="ECO:0000304"/>
    <property type="project" value="HGNC-UCL"/>
</dbReference>
<dbReference type="FunFam" id="1.25.40.10:FF:000003">
    <property type="entry name" value="kinesin light chain isoform X1"/>
    <property type="match status" value="1"/>
</dbReference>
<dbReference type="Gene3D" id="1.25.40.10">
    <property type="entry name" value="Tetratricopeptide repeat domain"/>
    <property type="match status" value="1"/>
</dbReference>
<dbReference type="InterPro" id="IPR002151">
    <property type="entry name" value="Kinesin_light"/>
</dbReference>
<dbReference type="InterPro" id="IPR015792">
    <property type="entry name" value="Kinesin_light_repeat"/>
</dbReference>
<dbReference type="InterPro" id="IPR011990">
    <property type="entry name" value="TPR-like_helical_dom_sf"/>
</dbReference>
<dbReference type="InterPro" id="IPR019734">
    <property type="entry name" value="TPR_rpt"/>
</dbReference>
<dbReference type="PANTHER" id="PTHR45783">
    <property type="entry name" value="KINESIN LIGHT CHAIN"/>
    <property type="match status" value="1"/>
</dbReference>
<dbReference type="PANTHER" id="PTHR45783:SF2">
    <property type="entry name" value="KINESIN LIGHT CHAIN 2"/>
    <property type="match status" value="1"/>
</dbReference>
<dbReference type="Pfam" id="PF13374">
    <property type="entry name" value="TPR_10"/>
    <property type="match status" value="1"/>
</dbReference>
<dbReference type="Pfam" id="PF13424">
    <property type="entry name" value="TPR_12"/>
    <property type="match status" value="2"/>
</dbReference>
<dbReference type="PRINTS" id="PR00381">
    <property type="entry name" value="KINESINLIGHT"/>
</dbReference>
<dbReference type="SMART" id="SM00028">
    <property type="entry name" value="TPR"/>
    <property type="match status" value="4"/>
</dbReference>
<dbReference type="SUPFAM" id="SSF48452">
    <property type="entry name" value="TPR-like"/>
    <property type="match status" value="2"/>
</dbReference>
<dbReference type="PROSITE" id="PS01160">
    <property type="entry name" value="KINESIN_LIGHT"/>
    <property type="match status" value="2"/>
</dbReference>
<dbReference type="PROSITE" id="PS50005">
    <property type="entry name" value="TPR"/>
    <property type="match status" value="5"/>
</dbReference>
<dbReference type="PROSITE" id="PS50293">
    <property type="entry name" value="TPR_REGION"/>
    <property type="match status" value="1"/>
</dbReference>
<name>KLC2_MOUSE</name>
<accession>O88448</accession>
<evidence type="ECO:0000250" key="1">
    <source>
        <dbReference type="UniProtKB" id="Q9H0B6"/>
    </source>
</evidence>
<evidence type="ECO:0000255" key="2"/>
<evidence type="ECO:0000256" key="3">
    <source>
        <dbReference type="SAM" id="MobiDB-lite"/>
    </source>
</evidence>
<evidence type="ECO:0000269" key="4">
    <source>
    </source>
</evidence>
<evidence type="ECO:0000305" key="5"/>
<evidence type="ECO:0000312" key="6">
    <source>
        <dbReference type="MGI" id="MGI:107953"/>
    </source>
</evidence>
<evidence type="ECO:0007744" key="7">
    <source>
    </source>
</evidence>
<evidence type="ECO:0007744" key="8">
    <source>
    </source>
</evidence>
<evidence type="ECO:0007829" key="9">
    <source>
        <dbReference type="PDB" id="3ZFW"/>
    </source>
</evidence>
<evidence type="ECO:0007829" key="10">
    <source>
        <dbReference type="PDB" id="6EJN"/>
    </source>
</evidence>
<sequence length="599" mass="66662">MATMVLPREEKLSQDEIVLGTKAVIQGLETLRGEHRALLAPLASHEAGEAEPGSQERCLLLRRSLEAIELGLGEAQVILALSSHLGAVESEKQKLRAQVRRLVQENQWLREELAGTQQKLQRSEQAVAQLEEEKQHLLFMSQIRKLDEMLPQEEKGDVPKDSLDDLFPNEDEQSPAPSPGGGDVAAQHGGYEIPARLRTLHNLVIQYASQGRYEVAVPLCKQALEDLEKTSGHDHPDVATMLNILALVYRDQNKYKDAAHLLNDALAIREKTLGKDHPAVAATLNNLAVLYGKRGKYKEAEPLCKRALEIREKVLGKFHPDVAKQLSNLALLCQNQGKAEEVEYYYRRALEIYATRLGPDDPNVAKTKNNLASCYLKQGKYQDAETLYKEILTRAHEKEFGSVNGENKPIWMHAEEREESKDKRRDRRPMEYGSWYKACKVDSPTVNTTLRTLGALYRPEGKLEAAHTLEDCASRSRKQGLDPASQTKVVELLKDGSGRGHRRGSRDVAGPQSESDLEESGPAAEWSGDGSGSLRRSGSFGKLRDALRRSSEMLVRKLQGGGPQEPNSRMKRASSLNFLNKSVEEPVQPGGRVFLTAAL</sequence>
<feature type="chain" id="PRO_0000215096" description="Kinesin light chain 2">
    <location>
        <begin position="1"/>
        <end position="599"/>
    </location>
</feature>
<feature type="repeat" description="TPR 1">
    <location>
        <begin position="197"/>
        <end position="230"/>
    </location>
</feature>
<feature type="repeat" description="TPR 2">
    <location>
        <begin position="239"/>
        <end position="272"/>
    </location>
</feature>
<feature type="repeat" description="TPR 3">
    <location>
        <begin position="281"/>
        <end position="314"/>
    </location>
</feature>
<feature type="repeat" description="TPR 4">
    <location>
        <begin position="323"/>
        <end position="356"/>
    </location>
</feature>
<feature type="repeat" description="TPR 5">
    <location>
        <begin position="365"/>
        <end position="398"/>
    </location>
</feature>
<feature type="repeat" description="TPR 6">
    <location>
        <begin position="447"/>
        <end position="480"/>
    </location>
</feature>
<feature type="region of interest" description="Disordered" evidence="3">
    <location>
        <begin position="154"/>
        <end position="188"/>
    </location>
</feature>
<feature type="region of interest" description="Disordered" evidence="3">
    <location>
        <begin position="492"/>
        <end position="541"/>
    </location>
</feature>
<feature type="coiled-coil region" evidence="2">
    <location>
        <begin position="78"/>
        <end position="143"/>
    </location>
</feature>
<feature type="compositionally biased region" description="Basic and acidic residues" evidence="3">
    <location>
        <begin position="154"/>
        <end position="163"/>
    </location>
</feature>
<feature type="compositionally biased region" description="Low complexity" evidence="3">
    <location>
        <begin position="532"/>
        <end position="541"/>
    </location>
</feature>
<feature type="modified residue" description="Phosphoserine" evidence="8">
    <location>
        <position position="174"/>
    </location>
</feature>
<feature type="modified residue" description="Phosphoserine" evidence="8">
    <location>
        <position position="178"/>
    </location>
</feature>
<feature type="modified residue" description="Phosphoserine" evidence="8">
    <location>
        <position position="443"/>
    </location>
</feature>
<feature type="modified residue" description="Phosphoserine" evidence="8">
    <location>
        <position position="505"/>
    </location>
</feature>
<feature type="modified residue" description="Phosphoserine" evidence="1">
    <location>
        <position position="515"/>
    </location>
</feature>
<feature type="modified residue" description="Phosphoserine" evidence="1">
    <location>
        <position position="574"/>
    </location>
</feature>
<feature type="modified residue" description="Phosphoserine" evidence="7 8">
    <location>
        <position position="575"/>
    </location>
</feature>
<feature type="modified residue" description="Phosphoserine" evidence="1">
    <location>
        <position position="582"/>
    </location>
</feature>
<feature type="helix" evidence="10">
    <location>
        <begin position="197"/>
        <end position="209"/>
    </location>
</feature>
<feature type="helix" evidence="10">
    <location>
        <begin position="213"/>
        <end position="230"/>
    </location>
</feature>
<feature type="strand" evidence="10">
    <location>
        <begin position="233"/>
        <end position="235"/>
    </location>
</feature>
<feature type="helix" evidence="9">
    <location>
        <begin position="236"/>
        <end position="251"/>
    </location>
</feature>
<feature type="helix" evidence="9">
    <location>
        <begin position="255"/>
        <end position="272"/>
    </location>
</feature>
<feature type="helix" evidence="9">
    <location>
        <begin position="278"/>
        <end position="293"/>
    </location>
</feature>
<feature type="helix" evidence="9">
    <location>
        <begin position="297"/>
        <end position="314"/>
    </location>
</feature>
<feature type="helix" evidence="9">
    <location>
        <begin position="320"/>
        <end position="334"/>
    </location>
</feature>
<feature type="turn" evidence="9">
    <location>
        <begin position="335"/>
        <end position="337"/>
    </location>
</feature>
<feature type="helix" evidence="9">
    <location>
        <begin position="339"/>
        <end position="356"/>
    </location>
</feature>
<feature type="helix" evidence="9">
    <location>
        <begin position="362"/>
        <end position="377"/>
    </location>
</feature>
<feature type="helix" evidence="9">
    <location>
        <begin position="381"/>
        <end position="400"/>
    </location>
</feature>
<feature type="strand" evidence="10">
    <location>
        <begin position="405"/>
        <end position="407"/>
    </location>
</feature>
<feature type="helix" evidence="9">
    <location>
        <begin position="410"/>
        <end position="418"/>
    </location>
</feature>
<feature type="helix" evidence="9">
    <location>
        <begin position="444"/>
        <end position="459"/>
    </location>
</feature>
<feature type="helix" evidence="9">
    <location>
        <begin position="463"/>
        <end position="476"/>
    </location>
</feature>